<reference key="1">
    <citation type="journal article" date="2002" name="Nature">
        <title>The genome sequence of Schizosaccharomyces pombe.</title>
        <authorList>
            <person name="Wood V."/>
            <person name="Gwilliam R."/>
            <person name="Rajandream M.A."/>
            <person name="Lyne M.H."/>
            <person name="Lyne R."/>
            <person name="Stewart A."/>
            <person name="Sgouros J.G."/>
            <person name="Peat N."/>
            <person name="Hayles J."/>
            <person name="Baker S.G."/>
            <person name="Basham D."/>
            <person name="Bowman S."/>
            <person name="Brooks K."/>
            <person name="Brown D."/>
            <person name="Brown S."/>
            <person name="Chillingworth T."/>
            <person name="Churcher C.M."/>
            <person name="Collins M."/>
            <person name="Connor R."/>
            <person name="Cronin A."/>
            <person name="Davis P."/>
            <person name="Feltwell T."/>
            <person name="Fraser A."/>
            <person name="Gentles S."/>
            <person name="Goble A."/>
            <person name="Hamlin N."/>
            <person name="Harris D.E."/>
            <person name="Hidalgo J."/>
            <person name="Hodgson G."/>
            <person name="Holroyd S."/>
            <person name="Hornsby T."/>
            <person name="Howarth S."/>
            <person name="Huckle E.J."/>
            <person name="Hunt S."/>
            <person name="Jagels K."/>
            <person name="James K.D."/>
            <person name="Jones L."/>
            <person name="Jones M."/>
            <person name="Leather S."/>
            <person name="McDonald S."/>
            <person name="McLean J."/>
            <person name="Mooney P."/>
            <person name="Moule S."/>
            <person name="Mungall K.L."/>
            <person name="Murphy L.D."/>
            <person name="Niblett D."/>
            <person name="Odell C."/>
            <person name="Oliver K."/>
            <person name="O'Neil S."/>
            <person name="Pearson D."/>
            <person name="Quail M.A."/>
            <person name="Rabbinowitsch E."/>
            <person name="Rutherford K.M."/>
            <person name="Rutter S."/>
            <person name="Saunders D."/>
            <person name="Seeger K."/>
            <person name="Sharp S."/>
            <person name="Skelton J."/>
            <person name="Simmonds M.N."/>
            <person name="Squares R."/>
            <person name="Squares S."/>
            <person name="Stevens K."/>
            <person name="Taylor K."/>
            <person name="Taylor R.G."/>
            <person name="Tivey A."/>
            <person name="Walsh S.V."/>
            <person name="Warren T."/>
            <person name="Whitehead S."/>
            <person name="Woodward J.R."/>
            <person name="Volckaert G."/>
            <person name="Aert R."/>
            <person name="Robben J."/>
            <person name="Grymonprez B."/>
            <person name="Weltjens I."/>
            <person name="Vanstreels E."/>
            <person name="Rieger M."/>
            <person name="Schaefer M."/>
            <person name="Mueller-Auer S."/>
            <person name="Gabel C."/>
            <person name="Fuchs M."/>
            <person name="Duesterhoeft A."/>
            <person name="Fritzc C."/>
            <person name="Holzer E."/>
            <person name="Moestl D."/>
            <person name="Hilbert H."/>
            <person name="Borzym K."/>
            <person name="Langer I."/>
            <person name="Beck A."/>
            <person name="Lehrach H."/>
            <person name="Reinhardt R."/>
            <person name="Pohl T.M."/>
            <person name="Eger P."/>
            <person name="Zimmermann W."/>
            <person name="Wedler H."/>
            <person name="Wambutt R."/>
            <person name="Purnelle B."/>
            <person name="Goffeau A."/>
            <person name="Cadieu E."/>
            <person name="Dreano S."/>
            <person name="Gloux S."/>
            <person name="Lelaure V."/>
            <person name="Mottier S."/>
            <person name="Galibert F."/>
            <person name="Aves S.J."/>
            <person name="Xiang Z."/>
            <person name="Hunt C."/>
            <person name="Moore K."/>
            <person name="Hurst S.M."/>
            <person name="Lucas M."/>
            <person name="Rochet M."/>
            <person name="Gaillardin C."/>
            <person name="Tallada V.A."/>
            <person name="Garzon A."/>
            <person name="Thode G."/>
            <person name="Daga R.R."/>
            <person name="Cruzado L."/>
            <person name="Jimenez J."/>
            <person name="Sanchez M."/>
            <person name="del Rey F."/>
            <person name="Benito J."/>
            <person name="Dominguez A."/>
            <person name="Revuelta J.L."/>
            <person name="Moreno S."/>
            <person name="Armstrong J."/>
            <person name="Forsburg S.L."/>
            <person name="Cerutti L."/>
            <person name="Lowe T."/>
            <person name="McCombie W.R."/>
            <person name="Paulsen I."/>
            <person name="Potashkin J."/>
            <person name="Shpakovski G.V."/>
            <person name="Ussery D."/>
            <person name="Barrell B.G."/>
            <person name="Nurse P."/>
        </authorList>
    </citation>
    <scope>NUCLEOTIDE SEQUENCE [LARGE SCALE GENOMIC DNA]</scope>
    <source>
        <strain>972 / ATCC 24843</strain>
    </source>
</reference>
<reference key="2">
    <citation type="journal article" date="2011" name="Science">
        <title>Comparative functional genomics of the fission yeasts.</title>
        <authorList>
            <person name="Rhind N."/>
            <person name="Chen Z."/>
            <person name="Yassour M."/>
            <person name="Thompson D.A."/>
            <person name="Haas B.J."/>
            <person name="Habib N."/>
            <person name="Wapinski I."/>
            <person name="Roy S."/>
            <person name="Lin M.F."/>
            <person name="Heiman D.I."/>
            <person name="Young S.K."/>
            <person name="Furuya K."/>
            <person name="Guo Y."/>
            <person name="Pidoux A."/>
            <person name="Chen H.M."/>
            <person name="Robbertse B."/>
            <person name="Goldberg J.M."/>
            <person name="Aoki K."/>
            <person name="Bayne E.H."/>
            <person name="Berlin A.M."/>
            <person name="Desjardins C.A."/>
            <person name="Dobbs E."/>
            <person name="Dukaj L."/>
            <person name="Fan L."/>
            <person name="FitzGerald M.G."/>
            <person name="French C."/>
            <person name="Gujja S."/>
            <person name="Hansen K."/>
            <person name="Keifenheim D."/>
            <person name="Levin J.Z."/>
            <person name="Mosher R.A."/>
            <person name="Mueller C.A."/>
            <person name="Pfiffner J."/>
            <person name="Priest M."/>
            <person name="Russ C."/>
            <person name="Smialowska A."/>
            <person name="Swoboda P."/>
            <person name="Sykes S.M."/>
            <person name="Vaughn M."/>
            <person name="Vengrova S."/>
            <person name="Yoder R."/>
            <person name="Zeng Q."/>
            <person name="Allshire R."/>
            <person name="Baulcombe D."/>
            <person name="Birren B.W."/>
            <person name="Brown W."/>
            <person name="Ekwall K."/>
            <person name="Kellis M."/>
            <person name="Leatherwood J."/>
            <person name="Levin H."/>
            <person name="Margalit H."/>
            <person name="Martienssen R."/>
            <person name="Nieduszynski C.A."/>
            <person name="Spatafora J.W."/>
            <person name="Friedman N."/>
            <person name="Dalgaard J.Z."/>
            <person name="Baumann P."/>
            <person name="Niki H."/>
            <person name="Regev A."/>
            <person name="Nusbaum C."/>
        </authorList>
    </citation>
    <scope>REVISION OF GENE MODEL</scope>
</reference>
<reference key="3">
    <citation type="journal article" date="2004" name="Cell">
        <title>Mis16 and Mis18 are required for CENP-A loading and histone deacetylation at centromeres.</title>
        <authorList>
            <person name="Hayashi T."/>
            <person name="Fujita Y."/>
            <person name="Iwasaki O."/>
            <person name="Adachi Y."/>
            <person name="Takahashi K."/>
            <person name="Yanagida M."/>
        </authorList>
    </citation>
    <scope>FUNCTION</scope>
    <scope>INTERACTION WITH MIS16</scope>
    <scope>SUBCELLULAR LOCATION</scope>
</reference>
<reference key="4">
    <citation type="journal article" date="2006" name="Nat. Biotechnol.">
        <title>ORFeome cloning and global analysis of protein localization in the fission yeast Schizosaccharomyces pombe.</title>
        <authorList>
            <person name="Matsuyama A."/>
            <person name="Arai R."/>
            <person name="Yashiroda Y."/>
            <person name="Shirai A."/>
            <person name="Kamata A."/>
            <person name="Sekido S."/>
            <person name="Kobayashi Y."/>
            <person name="Hashimoto A."/>
            <person name="Hamamoto M."/>
            <person name="Hiraoka Y."/>
            <person name="Horinouchi S."/>
            <person name="Yoshida M."/>
        </authorList>
    </citation>
    <scope>SUBCELLULAR LOCATION [LARGE SCALE ANALYSIS]</scope>
</reference>
<reference key="5">
    <citation type="journal article" date="2007" name="Dev. Cell">
        <title>Priming of centromere for CENP-A recruitment by human hMis18alpha, hMis18beta, and M18BP1.</title>
        <authorList>
            <person name="Fujita Y."/>
            <person name="Hayashi T."/>
            <person name="Kiyomitsu T."/>
            <person name="Toyoda Y."/>
            <person name="Kokubu A."/>
            <person name="Obuse C."/>
            <person name="Yanagida M."/>
        </authorList>
    </citation>
    <scope>SUBCELLULAR LOCATION</scope>
</reference>
<reference key="6">
    <citation type="journal article" date="2014" name="Genes Cells">
        <title>Schizosaccharomyces pombe centromere protein Mis19 links Mis16 and Mis18 to recruit CENP-A through interacting with NMD factors and the SWI/SNF complex.</title>
        <authorList>
            <person name="Hayashi T."/>
            <person name="Ebe M."/>
            <person name="Nagao K."/>
            <person name="Kokubu A."/>
            <person name="Sajiki K."/>
            <person name="Yanagida M."/>
        </authorList>
    </citation>
    <scope>IDENTIFICATION IN THE CENP-A RECRUITING COMPLEX</scope>
    <scope>FUNCTION</scope>
</reference>
<reference key="7">
    <citation type="journal article" date="2014" name="Open Biol.">
        <title>Eic1 links Mis18 with the CCAN/Mis6/Ctf19 complex to promote CENP-A assembly.</title>
        <authorList>
            <person name="Subramanian L."/>
            <person name="Toda N.R."/>
            <person name="Rappsilber J."/>
            <person name="Allshire R.C."/>
        </authorList>
    </citation>
    <scope>IDENTIFICATION IN THE CENP-A RECRUITING COMPLEX</scope>
    <scope>FUNCTION</scope>
</reference>
<reference key="8">
    <citation type="journal article" date="2014" name="PLoS ONE">
        <title>The kinetochore protein Kis1/Eic1/Mis19 ensures the integrity of mitotic spindles through maintenance of kinetochore factors Mis6/CENP-I and CENP-A.</title>
        <authorList>
            <person name="Hirai H."/>
            <person name="Arai K."/>
            <person name="Kariyazono R."/>
            <person name="Yamamoto M."/>
            <person name="Sato M."/>
        </authorList>
    </citation>
    <scope>IDENTIFICATION IN THE CENP-A RECRUITING COMPLEX</scope>
    <scope>FUNCTION</scope>
</reference>
<reference key="9">
    <citation type="journal article" date="2016" name="EMBO Rep.">
        <title>Centromere localization and function of Mis18 requires Yippee-like domain-mediated oligomerization.</title>
        <authorList>
            <person name="Subramanian L."/>
            <person name="Medina-Pritchard B."/>
            <person name="Barton R."/>
            <person name="Spiller F."/>
            <person name="Kulasegaran-Shylini R."/>
            <person name="Radaviciute G."/>
            <person name="Allshire R.C."/>
            <person name="Arockia Jeyaprakash A."/>
        </authorList>
    </citation>
    <scope>X-RAY CRYSTALLOGRAPHY (2.64 ANGSTROMS) OF 1-120 IN COMPLEX WITH ZINC IONS</scope>
    <scope>SUBUNIT</scope>
    <scope>SUBCELLULAR LOCATION</scope>
    <scope>MUTAGENESIS OF VAL-22; ILE-31; TYR-90 AND TYR-114</scope>
</reference>
<comment type="function">
    <text evidence="3 6 7 8">Component of the CENP-A recruiting complex that ensures the integrity of mitotic spindles through maintenance of kinetochore factors mis6/CENP-I and cnp1/CENP-A (PubMed:15369671, PubMed:24774534, PubMed:24789708, PubMed:25375240). Maintains the deacetylated state of histones specifically in the central core of the centromeres (PubMed:15369671).</text>
</comment>
<comment type="subunit">
    <text evidence="3 6 7 8 9">Homotetramer (PubMed:26921242). Component of the CENP-A recruiting complex composed of at least mis16, mis19, mis19 and mis20 (PubMed:15369671, PubMed:24774534, PubMed:24789708, PubMed:25375240).</text>
</comment>
<comment type="interaction">
    <interactant intactId="EBI-1148763">
        <id>Q9P802</id>
    </interactant>
    <interactant intactId="EBI-1148703">
        <id>O94244</id>
        <label>mis16</label>
    </interactant>
    <organismsDiffer>false</organismsDiffer>
    <experiments>2</experiments>
</comment>
<comment type="subcellular location">
    <subcellularLocation>
        <location evidence="4">Cytoplasm</location>
    </subcellularLocation>
    <subcellularLocation>
        <location evidence="5">Nucleus</location>
    </subcellularLocation>
    <subcellularLocation>
        <location evidence="3 5 9">Chromosome</location>
        <location evidence="3 5 9">Centromere</location>
    </subcellularLocation>
    <subcellularLocation>
        <location evidence="3">Chromosome</location>
        <location evidence="3">Centromere</location>
        <location evidence="3">Kinetochore</location>
    </subcellularLocation>
</comment>
<comment type="similarity">
    <text evidence="1">Belongs to the mis18 family.</text>
</comment>
<sequence>MSQTETSHSGYIDFKKESQPSVFQCKKCFQIVGDSNAWVISHREYLSFTLSDAVENSVRVEDTFKRSDDGLCVYSELSCTRCNEVIGKVYNSTPIYLDDIRDMYTFSMDKLQAYQLGNKTVNPEGLTRYQVDLEMREDIIKLKSFCLSLYEKFELHDETLRSVKETISSLKKPKIEGKEGKKEKARTYSKRTRK</sequence>
<name>MIS18_SCHPO</name>
<accession>Q9P802</accession>
<gene>
    <name type="primary">mis18</name>
    <name type="ORF">SPCC970.12</name>
</gene>
<evidence type="ECO:0000255" key="1">
    <source>
        <dbReference type="PROSITE-ProRule" id="PRU01129"/>
    </source>
</evidence>
<evidence type="ECO:0000256" key="2">
    <source>
        <dbReference type="SAM" id="MobiDB-lite"/>
    </source>
</evidence>
<evidence type="ECO:0000269" key="3">
    <source>
    </source>
</evidence>
<evidence type="ECO:0000269" key="4">
    <source>
    </source>
</evidence>
<evidence type="ECO:0000269" key="5">
    <source>
    </source>
</evidence>
<evidence type="ECO:0000269" key="6">
    <source>
    </source>
</evidence>
<evidence type="ECO:0000269" key="7">
    <source>
    </source>
</evidence>
<evidence type="ECO:0000269" key="8">
    <source>
    </source>
</evidence>
<evidence type="ECO:0000269" key="9">
    <source>
    </source>
</evidence>
<evidence type="ECO:0007744" key="10">
    <source>
        <dbReference type="PDB" id="5HJ0"/>
    </source>
</evidence>
<evidence type="ECO:0007829" key="11">
    <source>
        <dbReference type="PDB" id="5HJ0"/>
    </source>
</evidence>
<evidence type="ECO:0007829" key="12">
    <source>
        <dbReference type="PDB" id="5J6P"/>
    </source>
</evidence>
<protein>
    <recommendedName>
        <fullName>Kinetochore protein mis18</fullName>
    </recommendedName>
</protein>
<feature type="chain" id="PRO_0000116562" description="Kinetochore protein mis18">
    <location>
        <begin position="1"/>
        <end position="194"/>
    </location>
</feature>
<feature type="domain" description="Mis18" evidence="1">
    <location>
        <begin position="20"/>
        <end position="116"/>
    </location>
</feature>
<feature type="region of interest" description="Disordered" evidence="2">
    <location>
        <begin position="174"/>
        <end position="194"/>
    </location>
</feature>
<feature type="compositionally biased region" description="Basic and acidic residues" evidence="2">
    <location>
        <begin position="174"/>
        <end position="186"/>
    </location>
</feature>
<feature type="binding site" evidence="1 10">
    <location>
        <position position="25"/>
    </location>
    <ligand>
        <name>Zn(2+)</name>
        <dbReference type="ChEBI" id="CHEBI:29105"/>
    </ligand>
</feature>
<feature type="binding site" evidence="1 10">
    <location>
        <position position="28"/>
    </location>
    <ligand>
        <name>Zn(2+)</name>
        <dbReference type="ChEBI" id="CHEBI:29105"/>
    </ligand>
</feature>
<feature type="binding site" evidence="1 10">
    <location>
        <position position="79"/>
    </location>
    <ligand>
        <name>Zn(2+)</name>
        <dbReference type="ChEBI" id="CHEBI:29105"/>
    </ligand>
</feature>
<feature type="binding site" evidence="1 10">
    <location>
        <position position="82"/>
    </location>
    <ligand>
        <name>Zn(2+)</name>
        <dbReference type="ChEBI" id="CHEBI:29105"/>
    </ligand>
</feature>
<feature type="mutagenesis site" description="Abolishes self-association." evidence="9">
    <original>V</original>
    <variation>E</variation>
    <location>
        <position position="22"/>
    </location>
</feature>
<feature type="mutagenesis site" description="Abolishes self-association. Loss of function." evidence="9">
    <original>I</original>
    <variation>A</variation>
    <location>
        <position position="31"/>
    </location>
</feature>
<feature type="mutagenesis site" description="Loss of function." evidence="9">
    <original>Y</original>
    <variation>A</variation>
    <location>
        <position position="90"/>
    </location>
</feature>
<feature type="mutagenesis site" description="Abolishes self-association. Loss of function." evidence="9">
    <original>Y</original>
    <variation>A</variation>
    <variation>E</variation>
    <location>
        <position position="114"/>
    </location>
</feature>
<feature type="strand" evidence="12">
    <location>
        <begin position="21"/>
        <end position="25"/>
    </location>
</feature>
<feature type="turn" evidence="12">
    <location>
        <begin position="26"/>
        <end position="28"/>
    </location>
</feature>
<feature type="strand" evidence="12">
    <location>
        <begin position="31"/>
        <end position="34"/>
    </location>
</feature>
<feature type="helix" evidence="12">
    <location>
        <begin position="35"/>
        <end position="37"/>
    </location>
</feature>
<feature type="strand" evidence="12">
    <location>
        <begin position="38"/>
        <end position="42"/>
    </location>
</feature>
<feature type="helix" evidence="12">
    <location>
        <begin position="43"/>
        <end position="45"/>
    </location>
</feature>
<feature type="strand" evidence="12">
    <location>
        <begin position="47"/>
        <end position="51"/>
    </location>
</feature>
<feature type="helix" evidence="12">
    <location>
        <begin position="55"/>
        <end position="57"/>
    </location>
</feature>
<feature type="strand" evidence="12">
    <location>
        <begin position="58"/>
        <end position="60"/>
    </location>
</feature>
<feature type="strand" evidence="11">
    <location>
        <begin position="68"/>
        <end position="71"/>
    </location>
</feature>
<feature type="strand" evidence="12">
    <location>
        <begin position="73"/>
        <end position="79"/>
    </location>
</feature>
<feature type="turn" evidence="12">
    <location>
        <begin position="80"/>
        <end position="82"/>
    </location>
</feature>
<feature type="strand" evidence="12">
    <location>
        <begin position="85"/>
        <end position="93"/>
    </location>
</feature>
<feature type="helix" evidence="12">
    <location>
        <begin position="96"/>
        <end position="99"/>
    </location>
</feature>
<feature type="turn" evidence="12">
    <location>
        <begin position="100"/>
        <end position="102"/>
    </location>
</feature>
<feature type="strand" evidence="12">
    <location>
        <begin position="103"/>
        <end position="107"/>
    </location>
</feature>
<feature type="helix" evidence="12">
    <location>
        <begin position="108"/>
        <end position="110"/>
    </location>
</feature>
<feature type="strand" evidence="12">
    <location>
        <begin position="111"/>
        <end position="115"/>
    </location>
</feature>
<dbReference type="EMBL" id="CU329672">
    <property type="protein sequence ID" value="CAB72327.2"/>
    <property type="molecule type" value="Genomic_DNA"/>
</dbReference>
<dbReference type="RefSeq" id="NP_587854.2">
    <property type="nucleotide sequence ID" value="NM_001022847.2"/>
</dbReference>
<dbReference type="PDB" id="5HJ0">
    <property type="method" value="X-ray"/>
    <property type="resolution" value="2.64 A"/>
    <property type="chains" value="A/B/C=1-120"/>
</dbReference>
<dbReference type="PDB" id="5J6P">
    <property type="method" value="X-ray"/>
    <property type="resolution" value="2.60 A"/>
    <property type="chains" value="A/B/C=17-118"/>
</dbReference>
<dbReference type="PDBsum" id="5HJ0"/>
<dbReference type="PDBsum" id="5J6P"/>
<dbReference type="SMR" id="Q9P802"/>
<dbReference type="BioGRID" id="275346">
    <property type="interactions" value="18"/>
</dbReference>
<dbReference type="FunCoup" id="Q9P802">
    <property type="interactions" value="123"/>
</dbReference>
<dbReference type="IntAct" id="Q9P802">
    <property type="interactions" value="1"/>
</dbReference>
<dbReference type="STRING" id="284812.Q9P802"/>
<dbReference type="iPTMnet" id="Q9P802"/>
<dbReference type="PaxDb" id="4896-SPCC970.12.1"/>
<dbReference type="EnsemblFungi" id="SPCC970.12.1">
    <property type="protein sequence ID" value="SPCC970.12.1:pep"/>
    <property type="gene ID" value="SPCC970.12"/>
</dbReference>
<dbReference type="GeneID" id="2538763"/>
<dbReference type="KEGG" id="spo:2538763"/>
<dbReference type="PomBase" id="SPCC970.12">
    <property type="gene designation" value="mis18"/>
</dbReference>
<dbReference type="VEuPathDB" id="FungiDB:SPCC970.12"/>
<dbReference type="eggNOG" id="ENOG502S9R8">
    <property type="taxonomic scope" value="Eukaryota"/>
</dbReference>
<dbReference type="HOGENOM" id="CLU_120608_0_0_1"/>
<dbReference type="InParanoid" id="Q9P802"/>
<dbReference type="OMA" id="WVISHRE"/>
<dbReference type="EvolutionaryTrace" id="Q9P802"/>
<dbReference type="PRO" id="PR:Q9P802"/>
<dbReference type="Proteomes" id="UP000002485">
    <property type="component" value="Chromosome III"/>
</dbReference>
<dbReference type="GO" id="GO:0098654">
    <property type="term" value="C:CENP-A recruiting complex"/>
    <property type="evidence" value="ECO:0000314"/>
    <property type="project" value="PomBase"/>
</dbReference>
<dbReference type="GO" id="GO:0000785">
    <property type="term" value="C:chromatin"/>
    <property type="evidence" value="ECO:0000314"/>
    <property type="project" value="PomBase"/>
</dbReference>
<dbReference type="GO" id="GO:0000775">
    <property type="term" value="C:chromosome, centromeric region"/>
    <property type="evidence" value="ECO:0000318"/>
    <property type="project" value="GO_Central"/>
</dbReference>
<dbReference type="GO" id="GO:0005737">
    <property type="term" value="C:cytoplasm"/>
    <property type="evidence" value="ECO:0007669"/>
    <property type="project" value="UniProtKB-SubCell"/>
</dbReference>
<dbReference type="GO" id="GO:0000776">
    <property type="term" value="C:kinetochore"/>
    <property type="evidence" value="ECO:0000314"/>
    <property type="project" value="PomBase"/>
</dbReference>
<dbReference type="GO" id="GO:0005634">
    <property type="term" value="C:nucleus"/>
    <property type="evidence" value="ECO:0000318"/>
    <property type="project" value="GO_Central"/>
</dbReference>
<dbReference type="GO" id="GO:0008270">
    <property type="term" value="F:zinc ion binding"/>
    <property type="evidence" value="ECO:0000314"/>
    <property type="project" value="PomBase"/>
</dbReference>
<dbReference type="GO" id="GO:0051301">
    <property type="term" value="P:cell division"/>
    <property type="evidence" value="ECO:0007669"/>
    <property type="project" value="UniProtKB-KW"/>
</dbReference>
<dbReference type="GO" id="GO:0034080">
    <property type="term" value="P:CENP-A containing chromatin assembly"/>
    <property type="evidence" value="ECO:0000315"/>
    <property type="project" value="PomBase"/>
</dbReference>
<dbReference type="GO" id="GO:0007059">
    <property type="term" value="P:chromosome segregation"/>
    <property type="evidence" value="ECO:0000318"/>
    <property type="project" value="GO_Central"/>
</dbReference>
<dbReference type="InterPro" id="IPR034752">
    <property type="entry name" value="Mis18"/>
</dbReference>
<dbReference type="InterPro" id="IPR004910">
    <property type="entry name" value="Yippee/Mis18/Cereblon"/>
</dbReference>
<dbReference type="PANTHER" id="PTHR16431">
    <property type="entry name" value="NEUROGENIC PROTEIN MASTERMIND"/>
    <property type="match status" value="1"/>
</dbReference>
<dbReference type="PANTHER" id="PTHR16431:SF1">
    <property type="entry name" value="NEUROGENIC PROTEIN MASTERMIND"/>
    <property type="match status" value="1"/>
</dbReference>
<dbReference type="Pfam" id="PF03226">
    <property type="entry name" value="Yippee-Mis18"/>
    <property type="match status" value="1"/>
</dbReference>
<dbReference type="PROSITE" id="PS51793">
    <property type="entry name" value="MIS18"/>
    <property type="match status" value="1"/>
</dbReference>
<proteinExistence type="evidence at protein level"/>
<keyword id="KW-0002">3D-structure</keyword>
<keyword id="KW-0131">Cell cycle</keyword>
<keyword id="KW-0132">Cell division</keyword>
<keyword id="KW-0137">Centromere</keyword>
<keyword id="KW-0158">Chromosome</keyword>
<keyword id="KW-0963">Cytoplasm</keyword>
<keyword id="KW-0995">Kinetochore</keyword>
<keyword id="KW-0479">Metal-binding</keyword>
<keyword id="KW-0498">Mitosis</keyword>
<keyword id="KW-0539">Nucleus</keyword>
<keyword id="KW-1185">Reference proteome</keyword>
<keyword id="KW-0862">Zinc</keyword>
<organism>
    <name type="scientific">Schizosaccharomyces pombe (strain 972 / ATCC 24843)</name>
    <name type="common">Fission yeast</name>
    <dbReference type="NCBI Taxonomy" id="284812"/>
    <lineage>
        <taxon>Eukaryota</taxon>
        <taxon>Fungi</taxon>
        <taxon>Dikarya</taxon>
        <taxon>Ascomycota</taxon>
        <taxon>Taphrinomycotina</taxon>
        <taxon>Schizosaccharomycetes</taxon>
        <taxon>Schizosaccharomycetales</taxon>
        <taxon>Schizosaccharomycetaceae</taxon>
        <taxon>Schizosaccharomyces</taxon>
    </lineage>
</organism>